<dbReference type="EC" id="4.6.1.-" evidence="4"/>
<dbReference type="EMBL" id="FJ171479">
    <property type="protein sequence ID" value="ACN48975.1"/>
    <property type="molecule type" value="mRNA"/>
</dbReference>
<dbReference type="SMR" id="C0JB44"/>
<dbReference type="GO" id="GO:0005576">
    <property type="term" value="C:extracellular region"/>
    <property type="evidence" value="ECO:0007669"/>
    <property type="project" value="UniProtKB-SubCell"/>
</dbReference>
<dbReference type="GO" id="GO:0016829">
    <property type="term" value="F:lyase activity"/>
    <property type="evidence" value="ECO:0007669"/>
    <property type="project" value="UniProtKB-KW"/>
</dbReference>
<dbReference type="GO" id="GO:0046872">
    <property type="term" value="F:metal ion binding"/>
    <property type="evidence" value="ECO:0007669"/>
    <property type="project" value="UniProtKB-KW"/>
</dbReference>
<dbReference type="GO" id="GO:0008081">
    <property type="term" value="F:phosphoric diester hydrolase activity"/>
    <property type="evidence" value="ECO:0007669"/>
    <property type="project" value="InterPro"/>
</dbReference>
<dbReference type="GO" id="GO:0090729">
    <property type="term" value="F:toxin activity"/>
    <property type="evidence" value="ECO:0007669"/>
    <property type="project" value="UniProtKB-KW"/>
</dbReference>
<dbReference type="GO" id="GO:0031640">
    <property type="term" value="P:killing of cells of another organism"/>
    <property type="evidence" value="ECO:0007669"/>
    <property type="project" value="UniProtKB-KW"/>
</dbReference>
<dbReference type="GO" id="GO:0016042">
    <property type="term" value="P:lipid catabolic process"/>
    <property type="evidence" value="ECO:0007669"/>
    <property type="project" value="UniProtKB-KW"/>
</dbReference>
<dbReference type="CDD" id="cd08576">
    <property type="entry name" value="GDPD_like_SMaseD_PLD"/>
    <property type="match status" value="1"/>
</dbReference>
<dbReference type="Gene3D" id="3.20.20.190">
    <property type="entry name" value="Phosphatidylinositol (PI) phosphodiesterase"/>
    <property type="match status" value="1"/>
</dbReference>
<dbReference type="InterPro" id="IPR017946">
    <property type="entry name" value="PLC-like_Pdiesterase_TIM-brl"/>
</dbReference>
<dbReference type="SUPFAM" id="SSF51695">
    <property type="entry name" value="PLC-like phosphodiesterases"/>
    <property type="match status" value="1"/>
</dbReference>
<comment type="function">
    <text evidence="1 3">Dermonecrotic toxins cleave the phosphodiester linkage between the phosphate and headgroup of certain phospholipids (sphingolipid and lysolipid substrates), forming an alcohol (often choline) and a cyclic phosphate (By similarity). This toxin acts on sphingomyelin (SM) (By similarity). It may also act on ceramide phosphoethanolamine (CPE), lysophosphatidylcholine (LPC) and lysophosphatidylethanolamine (LPE), but not on lysophosphatidylserine (LPS), and lysophosphatidylglycerol (LPG) (By similarity). It acts by transphosphatidylation, releasing exclusively cyclic phosphate products as second products (By similarity). Induces dermonecrosis, hemolysis, increased vascular permeability, edema, inflammatory response, and platelet aggregation (By similarity).</text>
</comment>
<comment type="catalytic activity">
    <reaction evidence="1">
        <text>an N-(acyl)-sphingosylphosphocholine = an N-(acyl)-sphingosyl-1,3-cyclic phosphate + choline</text>
        <dbReference type="Rhea" id="RHEA:60652"/>
        <dbReference type="ChEBI" id="CHEBI:15354"/>
        <dbReference type="ChEBI" id="CHEBI:64583"/>
        <dbReference type="ChEBI" id="CHEBI:143892"/>
    </reaction>
</comment>
<comment type="catalytic activity">
    <reaction evidence="1">
        <text>an N-(acyl)-sphingosylphosphoethanolamine = an N-(acyl)-sphingosyl-1,3-cyclic phosphate + ethanolamine</text>
        <dbReference type="Rhea" id="RHEA:60648"/>
        <dbReference type="ChEBI" id="CHEBI:57603"/>
        <dbReference type="ChEBI" id="CHEBI:143891"/>
        <dbReference type="ChEBI" id="CHEBI:143892"/>
    </reaction>
</comment>
<comment type="catalytic activity">
    <reaction evidence="1">
        <text>a 1-acyl-sn-glycero-3-phosphocholine = a 1-acyl-sn-glycero-2,3-cyclic phosphate + choline</text>
        <dbReference type="Rhea" id="RHEA:60700"/>
        <dbReference type="ChEBI" id="CHEBI:15354"/>
        <dbReference type="ChEBI" id="CHEBI:58168"/>
        <dbReference type="ChEBI" id="CHEBI:143947"/>
    </reaction>
</comment>
<comment type="catalytic activity">
    <reaction evidence="1">
        <text>a 1-acyl-sn-glycero-3-phosphoethanolamine = a 1-acyl-sn-glycero-2,3-cyclic phosphate + ethanolamine</text>
        <dbReference type="Rhea" id="RHEA:60704"/>
        <dbReference type="ChEBI" id="CHEBI:57603"/>
        <dbReference type="ChEBI" id="CHEBI:64381"/>
        <dbReference type="ChEBI" id="CHEBI:143947"/>
    </reaction>
</comment>
<comment type="cofactor">
    <cofactor evidence="5">
        <name>Mg(2+)</name>
        <dbReference type="ChEBI" id="CHEBI:18420"/>
    </cofactor>
    <text evidence="5">Binds 1 Mg(2+) ion per subunit.</text>
</comment>
<comment type="subcellular location">
    <subcellularLocation>
        <location evidence="8">Secreted</location>
    </subcellularLocation>
</comment>
<comment type="tissue specificity">
    <text evidence="8">Expressed by the venom gland.</text>
</comment>
<comment type="similarity">
    <text evidence="7">Belongs to the arthropod phospholipase D family. Class II subfamily.</text>
</comment>
<comment type="caution">
    <text evidence="1 2 4">The most common activity assay for dermonecrotic toxins detects enzymatic activity by monitoring choline release from substrate. Liberation of choline from sphingomyelin (SM) or lysophosphatidylcholine (LPC) is commonly assumed to result from substrate hydrolysis, giving either ceramide-1-phosphate (C1P) or lysophosphatidic acid (LPA), respectively, as a second product. However, two studies from Lajoie and colleagues (2013 and 2015) report the observation of exclusive formation of cyclic phosphate products as second products, resulting from intramolecular transphosphatidylation. Cyclic phosphates have vastly different biological properties from their monoester counterparts, and they may be relevant to the pathology of brown spider envenomation.</text>
</comment>
<sequence>FALAHMVNDFDILKSYLDEGANGVETDITFSDEGEPEYAFHGVPCDCKRWCRRTVGFNEYLQHVRDLSTPGNPKFREHFIAIVLDLKLNGLSQEALAHGGMRLADKLIAYYWAHGRNATRITFIVSVPKTSEKVFLKTFLEEIKAVGYDDMLSKVAFDFTDNGDFSETQKVFEGLGIHEHIWASDGITNCIPMLFRGTSRLEDLIRQRDVPGYKYISKVYAWTYDKETSVVKALELGVDGVMTNYADFVIGIINKPEHSSKYRLATYQDNPFEKFVKSA</sequence>
<feature type="chain" id="PRO_0000392863" description="Dermonecrotic toxin LspiSicTox-betaIE3i">
    <location>
        <begin position="1" status="less than"/>
        <end position="279"/>
    </location>
</feature>
<feature type="active site" evidence="5">
    <location>
        <position position="5"/>
    </location>
</feature>
<feature type="active site" description="Nucleophile" evidence="5">
    <location>
        <position position="41"/>
    </location>
</feature>
<feature type="binding site" evidence="5">
    <location>
        <position position="25"/>
    </location>
    <ligand>
        <name>Mg(2+)</name>
        <dbReference type="ChEBI" id="CHEBI:18420"/>
    </ligand>
</feature>
<feature type="binding site" evidence="5">
    <location>
        <position position="27"/>
    </location>
    <ligand>
        <name>Mg(2+)</name>
        <dbReference type="ChEBI" id="CHEBI:18420"/>
    </ligand>
</feature>
<feature type="binding site" evidence="5">
    <location>
        <position position="85"/>
    </location>
    <ligand>
        <name>Mg(2+)</name>
        <dbReference type="ChEBI" id="CHEBI:18420"/>
    </ligand>
</feature>
<feature type="disulfide bond" evidence="3">
    <location>
        <begin position="45"/>
        <end position="51"/>
    </location>
</feature>
<feature type="disulfide bond" evidence="3">
    <location>
        <begin position="47"/>
        <end position="190"/>
    </location>
</feature>
<feature type="non-terminal residue">
    <location>
        <position position="1"/>
    </location>
</feature>
<accession>C0JB44</accession>
<keyword id="KW-0204">Cytolysis</keyword>
<keyword id="KW-1061">Dermonecrotic toxin</keyword>
<keyword id="KW-1015">Disulfide bond</keyword>
<keyword id="KW-0354">Hemolysis</keyword>
<keyword id="KW-0442">Lipid degradation</keyword>
<keyword id="KW-0443">Lipid metabolism</keyword>
<keyword id="KW-0456">Lyase</keyword>
<keyword id="KW-0460">Magnesium</keyword>
<keyword id="KW-0479">Metal-binding</keyword>
<keyword id="KW-0964">Secreted</keyword>
<keyword id="KW-0800">Toxin</keyword>
<proteinExistence type="evidence at transcript level"/>
<protein>
    <recommendedName>
        <fullName evidence="6">Dermonecrotic toxin LspiSicTox-betaIE3i</fullName>
        <ecNumber evidence="4">4.6.1.-</ecNumber>
    </recommendedName>
    <alternativeName>
        <fullName>Phospholipase D</fullName>
        <shortName>PLD</shortName>
    </alternativeName>
    <alternativeName>
        <fullName>Sphingomyelin phosphodiesterase D</fullName>
        <shortName>SMD</shortName>
        <shortName>SMase D</shortName>
        <shortName>Sphingomyelinase D</shortName>
    </alternativeName>
</protein>
<evidence type="ECO:0000250" key="1">
    <source>
        <dbReference type="UniProtKB" id="A0A0D4WTV1"/>
    </source>
</evidence>
<evidence type="ECO:0000250" key="2">
    <source>
        <dbReference type="UniProtKB" id="A0A0D4WV12"/>
    </source>
</evidence>
<evidence type="ECO:0000250" key="3">
    <source>
        <dbReference type="UniProtKB" id="P0CE80"/>
    </source>
</evidence>
<evidence type="ECO:0000250" key="4">
    <source>
        <dbReference type="UniProtKB" id="Q4ZFU2"/>
    </source>
</evidence>
<evidence type="ECO:0000250" key="5">
    <source>
        <dbReference type="UniProtKB" id="Q8I914"/>
    </source>
</evidence>
<evidence type="ECO:0000303" key="6">
    <source>
    </source>
</evidence>
<evidence type="ECO:0000305" key="7"/>
<evidence type="ECO:0000305" key="8">
    <source>
    </source>
</evidence>
<reference key="1">
    <citation type="journal article" date="2009" name="Mol. Biol. Evol.">
        <title>Molecular evolution, functional variation, and proposed nomenclature of the gene family that includes sphingomyelinase D in sicariid spider venoms.</title>
        <authorList>
            <person name="Binford G.J."/>
            <person name="Bodner M.R."/>
            <person name="Cordes M.H."/>
            <person name="Baldwin K.L."/>
            <person name="Rynerson M.R."/>
            <person name="Burns S.N."/>
            <person name="Zobel-Thropp P.A."/>
        </authorList>
    </citation>
    <scope>NUCLEOTIDE SEQUENCE [MRNA]</scope>
    <scope>NOMENCLATURE</scope>
    <source>
        <strain>Borakalalo</strain>
        <tissue>Venom gland</tissue>
    </source>
</reference>
<name>B1T1_LOXSN</name>
<organism>
    <name type="scientific">Loxosceles spinulosa</name>
    <name type="common">Recluse spider</name>
    <dbReference type="NCBI Taxonomy" id="571532"/>
    <lineage>
        <taxon>Eukaryota</taxon>
        <taxon>Metazoa</taxon>
        <taxon>Ecdysozoa</taxon>
        <taxon>Arthropoda</taxon>
        <taxon>Chelicerata</taxon>
        <taxon>Arachnida</taxon>
        <taxon>Araneae</taxon>
        <taxon>Araneomorphae</taxon>
        <taxon>Haplogynae</taxon>
        <taxon>Scytodoidea</taxon>
        <taxon>Sicariidae</taxon>
        <taxon>Loxosceles</taxon>
    </lineage>
</organism>